<sequence>MNGFGRLEHFSGAVYEGQFKDNMFHGLGTYTFPNGAKYTGNFNENRVEGEGEYTDIQGLEWSGNFHFTAAPDLKLKLHM</sequence>
<reference key="1">
    <citation type="journal article" date="2010" name="Theriogenology">
        <title>Identification and characterization of a novel mouse and human MOPT gene containing MORN-motif protein in testis.</title>
        <authorList>
            <person name="Choi Y.J."/>
            <person name="Hwang K.C."/>
            <person name="Park J.Y."/>
            <person name="Park K.K."/>
            <person name="Kim J.H."/>
            <person name="Park S.B."/>
            <person name="Hwang S."/>
            <person name="Park H."/>
            <person name="Park C."/>
            <person name="Kim J.H."/>
        </authorList>
    </citation>
    <scope>NUCLEOTIDE SEQUENCE [MRNA]</scope>
    <source>
        <tissue evidence="5">Testis</tissue>
    </source>
</reference>
<reference key="2">
    <citation type="journal article" date="2004" name="Genome Res.">
        <title>The status, quality, and expansion of the NIH full-length cDNA project: the Mammalian Gene Collection (MGC).</title>
        <authorList>
            <consortium name="The MGC Project Team"/>
        </authorList>
    </citation>
    <scope>NUCLEOTIDE SEQUENCE [LARGE SCALE MRNA]</scope>
    <scope>VARIANT LYS-48</scope>
    <source>
        <tissue>Chondrosarcoma</tissue>
    </source>
</reference>
<gene>
    <name evidence="6" type="primary">MORN2</name>
    <name evidence="4" type="synonym">MOPT</name>
</gene>
<comment type="function">
    <text evidence="1">Might have a role in spermatogenesis.</text>
</comment>
<comment type="interaction">
    <interactant intactId="EBI-725982">
        <id>Q502X0</id>
    </interactant>
    <interactant intactId="EBI-739467">
        <id>Q9H8Y8</id>
        <label>GORASP2</label>
    </interactant>
    <organismsDiffer>false</organismsDiffer>
    <experiments>3</experiments>
</comment>
<comment type="subcellular location">
    <subcellularLocation>
        <location evidence="1">Cytoplasmic vesicle</location>
        <location evidence="1">Secretory vesicle</location>
        <location evidence="1">Acrosome</location>
    </subcellularLocation>
    <subcellularLocation>
        <location evidence="1">Nucleus</location>
    </subcellularLocation>
    <text evidence="1">Associated with the acrosome during post-meiotic stages of spermatogenesis. Appears to migrate to the nucleus during the final step of spermiogenesis.</text>
</comment>
<evidence type="ECO:0000250" key="1">
    <source>
        <dbReference type="UniProtKB" id="Q6UL01"/>
    </source>
</evidence>
<evidence type="ECO:0000255" key="2"/>
<evidence type="ECO:0000269" key="3">
    <source>
    </source>
</evidence>
<evidence type="ECO:0000303" key="4">
    <source>
    </source>
</evidence>
<evidence type="ECO:0000312" key="5">
    <source>
        <dbReference type="EMBL" id="AAQ73170.1"/>
    </source>
</evidence>
<evidence type="ECO:0000312" key="6">
    <source>
        <dbReference type="HGNC" id="HGNC:30166"/>
    </source>
</evidence>
<accession>Q502X0</accession>
<accession>Q6UL00</accession>
<keyword id="KW-0968">Cytoplasmic vesicle</keyword>
<keyword id="KW-0221">Differentiation</keyword>
<keyword id="KW-0539">Nucleus</keyword>
<keyword id="KW-1267">Proteomics identification</keyword>
<keyword id="KW-1185">Reference proteome</keyword>
<keyword id="KW-0677">Repeat</keyword>
<keyword id="KW-0744">Spermatogenesis</keyword>
<feature type="chain" id="PRO_0000247457" description="MORN repeat-containing protein 2">
    <location>
        <begin position="1"/>
        <end position="79"/>
    </location>
</feature>
<feature type="repeat" description="MORN 1" evidence="2">
    <location>
        <begin position="15"/>
        <end position="36"/>
    </location>
</feature>
<feature type="repeat" description="MORN 2" evidence="2">
    <location>
        <begin position="38"/>
        <end position="55"/>
    </location>
</feature>
<feature type="sequence variant" id="VAR_027106" description="In dbSNP:rs3099950." evidence="3">
    <original>E</original>
    <variation>K</variation>
    <location>
        <position position="48"/>
    </location>
</feature>
<dbReference type="EMBL" id="AY367766">
    <property type="protein sequence ID" value="AAQ73170.1"/>
    <property type="molecule type" value="mRNA"/>
</dbReference>
<dbReference type="EMBL" id="BC095472">
    <property type="protein sequence ID" value="AAH95472.1"/>
    <property type="molecule type" value="mRNA"/>
</dbReference>
<dbReference type="EMBL" id="BC102032">
    <property type="protein sequence ID" value="AAI02033.1"/>
    <property type="molecule type" value="mRNA"/>
</dbReference>
<dbReference type="EMBL" id="BC102034">
    <property type="protein sequence ID" value="AAI02035.1"/>
    <property type="molecule type" value="mRNA"/>
</dbReference>
<dbReference type="EMBL" id="BC102035">
    <property type="protein sequence ID" value="AAI02036.1"/>
    <property type="molecule type" value="mRNA"/>
</dbReference>
<dbReference type="RefSeq" id="NP_001138922.1">
    <property type="nucleotide sequence ID" value="NM_001145450.1"/>
</dbReference>
<dbReference type="SMR" id="Q502X0"/>
<dbReference type="BioGRID" id="610358">
    <property type="interactions" value="5"/>
</dbReference>
<dbReference type="FunCoup" id="Q502X0">
    <property type="interactions" value="56"/>
</dbReference>
<dbReference type="IntAct" id="Q502X0">
    <property type="interactions" value="5"/>
</dbReference>
<dbReference type="STRING" id="9606.ENSP00000386563"/>
<dbReference type="iPTMnet" id="Q502X0"/>
<dbReference type="PhosphoSitePlus" id="Q502X0"/>
<dbReference type="BioMuta" id="MORN2"/>
<dbReference type="DMDM" id="110810457"/>
<dbReference type="MassIVE" id="Q502X0"/>
<dbReference type="PaxDb" id="9606-ENSP00000386563"/>
<dbReference type="PeptideAtlas" id="Q502X0"/>
<dbReference type="ProteomicsDB" id="62399"/>
<dbReference type="Antibodypedia" id="71693">
    <property type="antibodies" value="28 antibodies from 7 providers"/>
</dbReference>
<dbReference type="DNASU" id="729967"/>
<dbReference type="Ensembl" id="ENST00000409665.5">
    <property type="protein sequence ID" value="ENSP00000386874.1"/>
    <property type="gene ID" value="ENSG00000188010.16"/>
</dbReference>
<dbReference type="Ensembl" id="ENST00000410014.5">
    <property type="protein sequence ID" value="ENSP00000386563.1"/>
    <property type="gene ID" value="ENSG00000188010.16"/>
</dbReference>
<dbReference type="GeneID" id="729967"/>
<dbReference type="KEGG" id="hsa:729967"/>
<dbReference type="UCSC" id="uc010fak.3">
    <property type="organism name" value="human"/>
</dbReference>
<dbReference type="AGR" id="HGNC:30166"/>
<dbReference type="CTD" id="729967"/>
<dbReference type="DisGeNET" id="729967"/>
<dbReference type="GeneCards" id="MORN2"/>
<dbReference type="HGNC" id="HGNC:30166">
    <property type="gene designation" value="MORN2"/>
</dbReference>
<dbReference type="HPA" id="ENSG00000188010">
    <property type="expression patterns" value="Tissue enhanced (choroid plexus, testis)"/>
</dbReference>
<dbReference type="neXtProt" id="NX_Q502X0"/>
<dbReference type="OpenTargets" id="ENSG00000188010"/>
<dbReference type="PharmGKB" id="PA142671343"/>
<dbReference type="VEuPathDB" id="HostDB:ENSG00000188010"/>
<dbReference type="eggNOG" id="ENOG502S53V">
    <property type="taxonomic scope" value="Eukaryota"/>
</dbReference>
<dbReference type="GeneTree" id="ENSGT00390000006619"/>
<dbReference type="HOGENOM" id="CLU_032017_5_5_1"/>
<dbReference type="InParanoid" id="Q502X0"/>
<dbReference type="OMA" id="MEGDGQF"/>
<dbReference type="OrthoDB" id="437960at2759"/>
<dbReference type="PAN-GO" id="Q502X0">
    <property type="GO annotations" value="0 GO annotations based on evolutionary models"/>
</dbReference>
<dbReference type="PhylomeDB" id="Q502X0"/>
<dbReference type="TreeFam" id="TF352715"/>
<dbReference type="PathwayCommons" id="Q502X0"/>
<dbReference type="SignaLink" id="Q502X0"/>
<dbReference type="BioGRID-ORCS" id="729967">
    <property type="hits" value="20 hits in 1152 CRISPR screens"/>
</dbReference>
<dbReference type="ChiTaRS" id="MORN2">
    <property type="organism name" value="human"/>
</dbReference>
<dbReference type="GenomeRNAi" id="729967"/>
<dbReference type="Pharos" id="Q502X0">
    <property type="development level" value="Tdark"/>
</dbReference>
<dbReference type="PRO" id="PR:Q502X0"/>
<dbReference type="Proteomes" id="UP000005640">
    <property type="component" value="Chromosome 2"/>
</dbReference>
<dbReference type="RNAct" id="Q502X0">
    <property type="molecule type" value="protein"/>
</dbReference>
<dbReference type="Bgee" id="ENSG00000188010">
    <property type="expression patterns" value="Expressed in left testis and 168 other cell types or tissues"/>
</dbReference>
<dbReference type="ExpressionAtlas" id="Q502X0">
    <property type="expression patterns" value="baseline and differential"/>
</dbReference>
<dbReference type="GO" id="GO:0001669">
    <property type="term" value="C:acrosomal vesicle"/>
    <property type="evidence" value="ECO:0007669"/>
    <property type="project" value="UniProtKB-SubCell"/>
</dbReference>
<dbReference type="GO" id="GO:0005634">
    <property type="term" value="C:nucleus"/>
    <property type="evidence" value="ECO:0007669"/>
    <property type="project" value="UniProtKB-SubCell"/>
</dbReference>
<dbReference type="GO" id="GO:0030154">
    <property type="term" value="P:cell differentiation"/>
    <property type="evidence" value="ECO:0007669"/>
    <property type="project" value="UniProtKB-KW"/>
</dbReference>
<dbReference type="GO" id="GO:0007283">
    <property type="term" value="P:spermatogenesis"/>
    <property type="evidence" value="ECO:0007669"/>
    <property type="project" value="UniProtKB-KW"/>
</dbReference>
<dbReference type="Gene3D" id="2.20.110.10">
    <property type="entry name" value="Histone H3 K4-specific methyltransferase SET7/9 N-terminal domain"/>
    <property type="match status" value="1"/>
</dbReference>
<dbReference type="InterPro" id="IPR003409">
    <property type="entry name" value="MORN"/>
</dbReference>
<dbReference type="InterPro" id="IPR052849">
    <property type="entry name" value="MORN_repeat_protein"/>
</dbReference>
<dbReference type="PANTHER" id="PTHR46917">
    <property type="entry name" value="MORN REPEAT-CONTAINING PROTEIN 2"/>
    <property type="match status" value="1"/>
</dbReference>
<dbReference type="PANTHER" id="PTHR46917:SF1">
    <property type="entry name" value="MORN REPEAT-CONTAINING PROTEIN 2"/>
    <property type="match status" value="1"/>
</dbReference>
<dbReference type="Pfam" id="PF02493">
    <property type="entry name" value="MORN"/>
    <property type="match status" value="2"/>
</dbReference>
<dbReference type="SMART" id="SM00698">
    <property type="entry name" value="MORN"/>
    <property type="match status" value="2"/>
</dbReference>
<dbReference type="SUPFAM" id="SSF82185">
    <property type="entry name" value="Histone H3 K4-specific methyltransferase SET7/9 N-terminal domain"/>
    <property type="match status" value="1"/>
</dbReference>
<protein>
    <recommendedName>
        <fullName evidence="6">MORN repeat-containing protein 2</fullName>
    </recommendedName>
    <alternativeName>
        <fullName evidence="4">MORN motif protein in testis</fullName>
    </alternativeName>
</protein>
<organism>
    <name type="scientific">Homo sapiens</name>
    <name type="common">Human</name>
    <dbReference type="NCBI Taxonomy" id="9606"/>
    <lineage>
        <taxon>Eukaryota</taxon>
        <taxon>Metazoa</taxon>
        <taxon>Chordata</taxon>
        <taxon>Craniata</taxon>
        <taxon>Vertebrata</taxon>
        <taxon>Euteleostomi</taxon>
        <taxon>Mammalia</taxon>
        <taxon>Eutheria</taxon>
        <taxon>Euarchontoglires</taxon>
        <taxon>Primates</taxon>
        <taxon>Haplorrhini</taxon>
        <taxon>Catarrhini</taxon>
        <taxon>Hominidae</taxon>
        <taxon>Homo</taxon>
    </lineage>
</organism>
<name>MORN2_HUMAN</name>
<proteinExistence type="evidence at protein level"/>